<sequence length="166" mass="18855">MNIRQQITQFLSLAYVFSSAFMLWKTLSVIANSHSPIVVVLSGSMEPAFQRGDILFLWNRDQQQKVGDIVVYEIDGKTIPIVHRVLREHHNQQKQLLLTKGDNNAVDDLSLYAKKQQYLNQKADLVGTVKGYLPFIGYVTILISENVYFKYGMLGLLGLSSLFSNE</sequence>
<feature type="chain" id="PRO_0000412321" description="Signal peptidase complex catalytic subunit SEC11">
    <location>
        <begin position="1"/>
        <end position="166"/>
    </location>
</feature>
<feature type="topological domain" description="Cytoplasmic" evidence="3">
    <location>
        <begin position="1"/>
        <end position="9"/>
    </location>
</feature>
<feature type="transmembrane region" description="Helical; Signal-anchor for type II membrane protein" evidence="3">
    <location>
        <begin position="10"/>
        <end position="30"/>
    </location>
</feature>
<feature type="topological domain" description="Lumenal" evidence="3">
    <location>
        <begin position="31"/>
        <end position="166"/>
    </location>
</feature>
<feature type="region of interest" description="C-terminal short (CTS) helix" evidence="2">
    <location>
        <begin position="152"/>
        <end position="163"/>
    </location>
</feature>
<feature type="active site" description="Charge relay system" evidence="1">
    <location>
        <position position="44"/>
    </location>
</feature>
<feature type="active site" description="Charge relay system" evidence="1">
    <location>
        <position position="83"/>
    </location>
</feature>
<feature type="active site" description="Charge relay system" evidence="1">
    <location>
        <position position="108"/>
    </location>
</feature>
<protein>
    <recommendedName>
        <fullName>Signal peptidase complex catalytic subunit SEC11</fullName>
        <ecNumber evidence="1">3.4.21.89</ecNumber>
    </recommendedName>
    <alternativeName>
        <fullName>Signal peptidase I</fullName>
    </alternativeName>
</protein>
<gene>
    <name type="primary">SEC11</name>
    <name type="ORF">CD36_25990</name>
</gene>
<reference key="1">
    <citation type="journal article" date="2009" name="Genome Res.">
        <title>Comparative genomics of the fungal pathogens Candida dubliniensis and Candida albicans.</title>
        <authorList>
            <person name="Jackson A.P."/>
            <person name="Gamble J.A."/>
            <person name="Yeomans T."/>
            <person name="Moran G.P."/>
            <person name="Saunders D."/>
            <person name="Harris D."/>
            <person name="Aslett M."/>
            <person name="Barrell J.F."/>
            <person name="Butler G."/>
            <person name="Citiulo F."/>
            <person name="Coleman D.C."/>
            <person name="de Groot P.W.J."/>
            <person name="Goodwin T.J."/>
            <person name="Quail M.A."/>
            <person name="McQuillan J."/>
            <person name="Munro C.A."/>
            <person name="Pain A."/>
            <person name="Poulter R.T."/>
            <person name="Rajandream M.A."/>
            <person name="Renauld H."/>
            <person name="Spiering M.J."/>
            <person name="Tivey A."/>
            <person name="Gow N.A.R."/>
            <person name="Barrell B."/>
            <person name="Sullivan D.J."/>
            <person name="Berriman M."/>
        </authorList>
    </citation>
    <scope>NUCLEOTIDE SEQUENCE [LARGE SCALE GENOMIC DNA]</scope>
    <source>
        <strain>CD36 / ATCC MYA-646 / CBS 7987 / NCPF 3949 / NRRL Y-17841</strain>
    </source>
</reference>
<proteinExistence type="inferred from homology"/>
<name>SEC11_CANDC</name>
<dbReference type="EC" id="3.4.21.89" evidence="1"/>
<dbReference type="EMBL" id="FM992695">
    <property type="protein sequence ID" value="CAX39634.1"/>
    <property type="molecule type" value="Genomic_DNA"/>
</dbReference>
<dbReference type="RefSeq" id="XP_002421695.1">
    <property type="nucleotide sequence ID" value="XM_002421650.1"/>
</dbReference>
<dbReference type="SMR" id="B9WKT4"/>
<dbReference type="MEROPS" id="S26.010"/>
<dbReference type="GeneID" id="8049800"/>
<dbReference type="KEGG" id="cdu:CD36_25990"/>
<dbReference type="CGD" id="CAL0000163475">
    <property type="gene designation" value="Cd36_25990"/>
</dbReference>
<dbReference type="VEuPathDB" id="FungiDB:CD36_25990"/>
<dbReference type="eggNOG" id="KOG3342">
    <property type="taxonomic scope" value="Eukaryota"/>
</dbReference>
<dbReference type="HOGENOM" id="CLU_089996_0_1_1"/>
<dbReference type="OrthoDB" id="10257561at2759"/>
<dbReference type="Proteomes" id="UP000002605">
    <property type="component" value="Chromosome R"/>
</dbReference>
<dbReference type="GO" id="GO:0005787">
    <property type="term" value="C:signal peptidase complex"/>
    <property type="evidence" value="ECO:0007669"/>
    <property type="project" value="UniProtKB-ARBA"/>
</dbReference>
<dbReference type="GO" id="GO:0004252">
    <property type="term" value="F:serine-type endopeptidase activity"/>
    <property type="evidence" value="ECO:0007669"/>
    <property type="project" value="UniProtKB-EC"/>
</dbReference>
<dbReference type="GO" id="GO:0006465">
    <property type="term" value="P:signal peptide processing"/>
    <property type="evidence" value="ECO:0007669"/>
    <property type="project" value="InterPro"/>
</dbReference>
<dbReference type="CDD" id="cd06530">
    <property type="entry name" value="S26_SPase_I"/>
    <property type="match status" value="1"/>
</dbReference>
<dbReference type="Gene3D" id="2.10.109.10">
    <property type="entry name" value="Umud Fragment, subunit A"/>
    <property type="match status" value="1"/>
</dbReference>
<dbReference type="InterPro" id="IPR036286">
    <property type="entry name" value="LexA/Signal_pep-like_sf"/>
</dbReference>
<dbReference type="InterPro" id="IPR019756">
    <property type="entry name" value="Pept_S26A_signal_pept_1_Ser-AS"/>
</dbReference>
<dbReference type="InterPro" id="IPR015927">
    <property type="entry name" value="Peptidase_S24_S26A/B/C"/>
</dbReference>
<dbReference type="InterPro" id="IPR019533">
    <property type="entry name" value="Peptidase_S26"/>
</dbReference>
<dbReference type="InterPro" id="IPR001733">
    <property type="entry name" value="Peptidase_S26B"/>
</dbReference>
<dbReference type="NCBIfam" id="TIGR02228">
    <property type="entry name" value="sigpep_I_arch"/>
    <property type="match status" value="1"/>
</dbReference>
<dbReference type="PANTHER" id="PTHR10806">
    <property type="entry name" value="SIGNAL PEPTIDASE COMPLEX CATALYTIC SUBUNIT SEC11"/>
    <property type="match status" value="1"/>
</dbReference>
<dbReference type="PANTHER" id="PTHR10806:SF6">
    <property type="entry name" value="SIGNAL PEPTIDASE COMPLEX CATALYTIC SUBUNIT SEC11"/>
    <property type="match status" value="1"/>
</dbReference>
<dbReference type="Pfam" id="PF00717">
    <property type="entry name" value="Peptidase_S24"/>
    <property type="match status" value="1"/>
</dbReference>
<dbReference type="PRINTS" id="PR00728">
    <property type="entry name" value="SIGNALPTASE"/>
</dbReference>
<dbReference type="SUPFAM" id="SSF51306">
    <property type="entry name" value="LexA/Signal peptidase"/>
    <property type="match status" value="1"/>
</dbReference>
<dbReference type="PROSITE" id="PS00501">
    <property type="entry name" value="SPASE_I_1"/>
    <property type="match status" value="1"/>
</dbReference>
<dbReference type="PROSITE" id="PS00761">
    <property type="entry name" value="SPASE_I_3"/>
    <property type="match status" value="1"/>
</dbReference>
<evidence type="ECO:0000250" key="1">
    <source>
        <dbReference type="UniProtKB" id="P15367"/>
    </source>
</evidence>
<evidence type="ECO:0000250" key="2">
    <source>
        <dbReference type="UniProtKB" id="P67812"/>
    </source>
</evidence>
<evidence type="ECO:0000255" key="3"/>
<evidence type="ECO:0000305" key="4"/>
<organism>
    <name type="scientific">Candida dubliniensis (strain CD36 / ATCC MYA-646 / CBS 7987 / NCPF 3949 / NRRL Y-17841)</name>
    <name type="common">Yeast</name>
    <dbReference type="NCBI Taxonomy" id="573826"/>
    <lineage>
        <taxon>Eukaryota</taxon>
        <taxon>Fungi</taxon>
        <taxon>Dikarya</taxon>
        <taxon>Ascomycota</taxon>
        <taxon>Saccharomycotina</taxon>
        <taxon>Pichiomycetes</taxon>
        <taxon>Debaryomycetaceae</taxon>
        <taxon>Candida/Lodderomyces clade</taxon>
        <taxon>Candida</taxon>
    </lineage>
</organism>
<keyword id="KW-0256">Endoplasmic reticulum</keyword>
<keyword id="KW-0378">Hydrolase</keyword>
<keyword id="KW-0472">Membrane</keyword>
<keyword id="KW-0645">Protease</keyword>
<keyword id="KW-0735">Signal-anchor</keyword>
<keyword id="KW-0812">Transmembrane</keyword>
<keyword id="KW-1133">Transmembrane helix</keyword>
<comment type="function">
    <text evidence="1 2">Catalytic component of the signal peptidase complex (SPC) which catalyzes the cleavage of N-terminal signal sequences from nascent proteins as they are translocated into the lumen of the endoplasmic reticulum (By similarity). Specifically cleaves N-terminal signal peptides that contain a hydrophobic alpha-helix (h-region) shorter than 18-20 amino acids (By similarity).</text>
</comment>
<comment type="catalytic activity">
    <reaction evidence="1">
        <text>Cleavage of hydrophobic, N-terminal signal or leader sequences from secreted and periplasmic proteins.</text>
        <dbReference type="EC" id="3.4.21.89"/>
    </reaction>
</comment>
<comment type="subunit">
    <text evidence="1 2">Component of the signal peptidase complex (SPC) composed of a catalytic subunit SEC11 and three accessory subunits SPC1, SPC2 and SPC3 (By similarity). The complex induces a local thinning of the ER membrane which is used to measure the length of the signal peptide (SP) h-region of protein substrates. This ensures the selectivity of the complex towards h-regions shorter than 18-20 amino acids (By similarity). SPC associates with the translocon complex (By similarity).</text>
</comment>
<comment type="subcellular location">
    <subcellularLocation>
        <location evidence="1">Endoplasmic reticulum membrane</location>
        <topology evidence="1">Single-pass type II membrane protein</topology>
    </subcellularLocation>
</comment>
<comment type="domain">
    <text evidence="2">The C-terminal short (CTS) helix is essential for catalytic activity. It may be accommodated as a transmembrane helix in the thinned membrane environment of the complex, similarly to the signal peptide in the complex substrates.</text>
</comment>
<comment type="similarity">
    <text evidence="4">Belongs to the peptidase S26B family.</text>
</comment>
<accession>B9WKT4</accession>